<gene>
    <name evidence="1" type="primary">slmA</name>
    <name type="ordered locus">Sbal195_0385</name>
</gene>
<proteinExistence type="inferred from homology"/>
<protein>
    <recommendedName>
        <fullName evidence="1">Nucleoid occlusion factor SlmA</fullName>
    </recommendedName>
</protein>
<accession>A9KY01</accession>
<feature type="chain" id="PRO_1000088461" description="Nucleoid occlusion factor SlmA">
    <location>
        <begin position="1"/>
        <end position="197"/>
    </location>
</feature>
<feature type="domain" description="HTH tetR-type" evidence="1">
    <location>
        <begin position="7"/>
        <end position="67"/>
    </location>
</feature>
<feature type="DNA-binding region" description="H-T-H motif" evidence="1">
    <location>
        <begin position="30"/>
        <end position="49"/>
    </location>
</feature>
<feature type="coiled-coil region" evidence="1">
    <location>
        <begin position="109"/>
        <end position="136"/>
    </location>
</feature>
<sequence>MAVSPKINRREHILQCLAQMLETNPGQRITTAKLASEVGVSEAALYRHFPSKARMFEGLIEFIEESLLSRINLIMDDEKDTMKRCQLVLQLLLIFAERNPGISRVLNGDALLGENERLRSRISNLFAKIETQLKQILREKTLREGKGFNLDEAILANLLLAFAEGRIAQFVRSEFKLKPTTHFDEQWRFIQHQLLQS</sequence>
<organism>
    <name type="scientific">Shewanella baltica (strain OS195)</name>
    <dbReference type="NCBI Taxonomy" id="399599"/>
    <lineage>
        <taxon>Bacteria</taxon>
        <taxon>Pseudomonadati</taxon>
        <taxon>Pseudomonadota</taxon>
        <taxon>Gammaproteobacteria</taxon>
        <taxon>Alteromonadales</taxon>
        <taxon>Shewanellaceae</taxon>
        <taxon>Shewanella</taxon>
    </lineage>
</organism>
<reference key="1">
    <citation type="submission" date="2007-11" db="EMBL/GenBank/DDBJ databases">
        <title>Complete sequence of chromosome of Shewanella baltica OS195.</title>
        <authorList>
            <consortium name="US DOE Joint Genome Institute"/>
            <person name="Copeland A."/>
            <person name="Lucas S."/>
            <person name="Lapidus A."/>
            <person name="Barry K."/>
            <person name="Glavina del Rio T."/>
            <person name="Dalin E."/>
            <person name="Tice H."/>
            <person name="Pitluck S."/>
            <person name="Chain P."/>
            <person name="Malfatti S."/>
            <person name="Shin M."/>
            <person name="Vergez L."/>
            <person name="Schmutz J."/>
            <person name="Larimer F."/>
            <person name="Land M."/>
            <person name="Hauser L."/>
            <person name="Kyrpides N."/>
            <person name="Kim E."/>
            <person name="Brettar I."/>
            <person name="Rodrigues J."/>
            <person name="Konstantinidis K."/>
            <person name="Klappenbach J."/>
            <person name="Hofle M."/>
            <person name="Tiedje J."/>
            <person name="Richardson P."/>
        </authorList>
    </citation>
    <scope>NUCLEOTIDE SEQUENCE [LARGE SCALE GENOMIC DNA]</scope>
    <source>
        <strain>OS195</strain>
    </source>
</reference>
<evidence type="ECO:0000255" key="1">
    <source>
        <dbReference type="HAMAP-Rule" id="MF_01839"/>
    </source>
</evidence>
<comment type="function">
    <text evidence="1">Required for nucleoid occlusion (NO) phenomenon, which prevents Z-ring formation and cell division over the nucleoid. Acts as a DNA-associated cell division inhibitor that binds simultaneously chromosomal DNA and FtsZ, and disrupts the assembly of FtsZ polymers. SlmA-DNA-binding sequences (SBS) are dispersed on non-Ter regions of the chromosome, preventing FtsZ polymerization at these regions.</text>
</comment>
<comment type="subunit">
    <text evidence="1">Homodimer. Interacts with FtsZ.</text>
</comment>
<comment type="subcellular location">
    <subcellularLocation>
        <location evidence="1">Cytoplasm</location>
        <location evidence="1">Nucleoid</location>
    </subcellularLocation>
</comment>
<comment type="similarity">
    <text evidence="1">Belongs to the nucleoid occlusion factor SlmA family.</text>
</comment>
<keyword id="KW-0131">Cell cycle</keyword>
<keyword id="KW-0132">Cell division</keyword>
<keyword id="KW-0175">Coiled coil</keyword>
<keyword id="KW-0963">Cytoplasm</keyword>
<keyword id="KW-0238">DNA-binding</keyword>
<name>SLMA_SHEB9</name>
<dbReference type="EMBL" id="CP000891">
    <property type="protein sequence ID" value="ABX47566.1"/>
    <property type="molecule type" value="Genomic_DNA"/>
</dbReference>
<dbReference type="RefSeq" id="WP_006079866.1">
    <property type="nucleotide sequence ID" value="NC_009997.1"/>
</dbReference>
<dbReference type="SMR" id="A9KY01"/>
<dbReference type="GeneID" id="11770724"/>
<dbReference type="KEGG" id="sbn:Sbal195_0385"/>
<dbReference type="HOGENOM" id="CLU_069356_5_0_6"/>
<dbReference type="Proteomes" id="UP000000770">
    <property type="component" value="Chromosome"/>
</dbReference>
<dbReference type="GO" id="GO:0043590">
    <property type="term" value="C:bacterial nucleoid"/>
    <property type="evidence" value="ECO:0007669"/>
    <property type="project" value="UniProtKB-UniRule"/>
</dbReference>
<dbReference type="GO" id="GO:0005737">
    <property type="term" value="C:cytoplasm"/>
    <property type="evidence" value="ECO:0007669"/>
    <property type="project" value="UniProtKB-UniRule"/>
</dbReference>
<dbReference type="GO" id="GO:0043565">
    <property type="term" value="F:sequence-specific DNA binding"/>
    <property type="evidence" value="ECO:0007669"/>
    <property type="project" value="UniProtKB-UniRule"/>
</dbReference>
<dbReference type="GO" id="GO:0051301">
    <property type="term" value="P:cell division"/>
    <property type="evidence" value="ECO:0007669"/>
    <property type="project" value="UniProtKB-KW"/>
</dbReference>
<dbReference type="GO" id="GO:0010974">
    <property type="term" value="P:negative regulation of division septum assembly"/>
    <property type="evidence" value="ECO:0007669"/>
    <property type="project" value="InterPro"/>
</dbReference>
<dbReference type="Gene3D" id="1.10.357.10">
    <property type="entry name" value="Tetracycline Repressor, domain 2"/>
    <property type="match status" value="1"/>
</dbReference>
<dbReference type="HAMAP" id="MF_01839">
    <property type="entry name" value="NO_factor_SlmA"/>
    <property type="match status" value="1"/>
</dbReference>
<dbReference type="InterPro" id="IPR009057">
    <property type="entry name" value="Homeodomain-like_sf"/>
</dbReference>
<dbReference type="InterPro" id="IPR050624">
    <property type="entry name" value="HTH-type_Tx_Regulator"/>
</dbReference>
<dbReference type="InterPro" id="IPR001647">
    <property type="entry name" value="HTH_TetR"/>
</dbReference>
<dbReference type="InterPro" id="IPR023769">
    <property type="entry name" value="NO_SlmA"/>
</dbReference>
<dbReference type="InterPro" id="IPR054580">
    <property type="entry name" value="SlmA-like_C"/>
</dbReference>
<dbReference type="NCBIfam" id="NF007015">
    <property type="entry name" value="PRK09480.1"/>
    <property type="match status" value="1"/>
</dbReference>
<dbReference type="PANTHER" id="PTHR43479">
    <property type="entry name" value="ACREF/ENVCD OPERON REPRESSOR-RELATED"/>
    <property type="match status" value="1"/>
</dbReference>
<dbReference type="PANTHER" id="PTHR43479:SF11">
    <property type="entry name" value="ACREF_ENVCD OPERON REPRESSOR-RELATED"/>
    <property type="match status" value="1"/>
</dbReference>
<dbReference type="Pfam" id="PF22276">
    <property type="entry name" value="SlmA-like_C"/>
    <property type="match status" value="1"/>
</dbReference>
<dbReference type="Pfam" id="PF00440">
    <property type="entry name" value="TetR_N"/>
    <property type="match status" value="1"/>
</dbReference>
<dbReference type="SUPFAM" id="SSF46689">
    <property type="entry name" value="Homeodomain-like"/>
    <property type="match status" value="1"/>
</dbReference>
<dbReference type="PROSITE" id="PS50977">
    <property type="entry name" value="HTH_TETR_2"/>
    <property type="match status" value="1"/>
</dbReference>